<sequence length="597" mass="68540">MSLAFNLRAIPFSGHTIQSRRGLFPVHESPMITTKPFVAVKCSLTTSTDLMGKIKDKFNGKVHTSLPAITTHSADTPCNLCIIDTLQRLGVDRYFQSEIDSILDDTYRLWQLKKEDIFSDITTHAMAFRLLRVKGYQVSSEELAPYADQERVNLQEIDVPTVIELYRAAQERVTEEDSTLKKLYVWTSTFLKQQLLTDAIPDKKLHEQVDYYLKNYHGILDRMGVRRSLDLYDVGHYKTLKAADGFSNLCNEDLLAFAMQDFNISQAQHQKELQQLQRWYSDCRLDTLKFGRDVVRVSNFLTSAMSGDPELSDVRLAFAKHIVLVTRIDDFFDHGGSKEESYKILELVKEWKEKPAGEYGSEEIEILFTAVYNTVNELAEMAHIEQGRSVKDLLIKLWVEILSIFKIELDTWSDDTALTLDEYLSSSWVSIGCRICILISMQFLGVKLTDEMLLSEECTDLCRHVSMVDRLLNDVQTFEKERKENTGNSVSLLLAAHKDERAINEEEAITKAKDLAEYNRRKLMQIVYKTGTIFPRKCKDMFLKVCRIGCYLYSSGDEFTTPQQMMEDMKSLVYEPLTIHPPEANNVVGRKQSCVSN</sequence>
<feature type="transit peptide" description="Chloroplast" evidence="3">
    <location>
        <begin position="1"/>
        <end position="51"/>
    </location>
</feature>
<feature type="chain" id="PRO_0000452386" description="Miltiradiene synthase KSL2, chloroplastic">
    <location>
        <begin position="52"/>
        <end position="597"/>
    </location>
</feature>
<feature type="short sequence motif" description="DDXXD motif" evidence="1">
    <location>
        <begin position="329"/>
        <end position="333"/>
    </location>
</feature>
<feature type="binding site" evidence="2">
    <location>
        <position position="329"/>
    </location>
    <ligand>
        <name>Mg(2+)</name>
        <dbReference type="ChEBI" id="CHEBI:18420"/>
        <label>1</label>
    </ligand>
</feature>
<feature type="binding site" evidence="2">
    <location>
        <position position="329"/>
    </location>
    <ligand>
        <name>Mg(2+)</name>
        <dbReference type="ChEBI" id="CHEBI:18420"/>
        <label>2</label>
    </ligand>
</feature>
<feature type="binding site" evidence="2">
    <location>
        <position position="333"/>
    </location>
    <ligand>
        <name>Mg(2+)</name>
        <dbReference type="ChEBI" id="CHEBI:18420"/>
        <label>1</label>
    </ligand>
</feature>
<feature type="binding site" evidence="2">
    <location>
        <position position="333"/>
    </location>
    <ligand>
        <name>Mg(2+)</name>
        <dbReference type="ChEBI" id="CHEBI:18420"/>
        <label>2</label>
    </ligand>
</feature>
<feature type="binding site" evidence="2">
    <location>
        <position position="473"/>
    </location>
    <ligand>
        <name>Mg(2+)</name>
        <dbReference type="ChEBI" id="CHEBI:18420"/>
        <label>3</label>
    </ligand>
</feature>
<feature type="binding site" evidence="2">
    <location>
        <position position="481"/>
    </location>
    <ligand>
        <name>Mg(2+)</name>
        <dbReference type="ChEBI" id="CHEBI:18420"/>
        <label>3</label>
    </ligand>
</feature>
<organism>
    <name type="scientific">Isodon japonicus</name>
    <name type="common">Scutellaria japonica</name>
    <dbReference type="NCBI Taxonomy" id="425908"/>
    <lineage>
        <taxon>Eukaryota</taxon>
        <taxon>Viridiplantae</taxon>
        <taxon>Streptophyta</taxon>
        <taxon>Embryophyta</taxon>
        <taxon>Tracheophyta</taxon>
        <taxon>Spermatophyta</taxon>
        <taxon>Magnoliopsida</taxon>
        <taxon>eudicotyledons</taxon>
        <taxon>Gunneridae</taxon>
        <taxon>Pentapetalae</taxon>
        <taxon>asterids</taxon>
        <taxon>lamiids</taxon>
        <taxon>Lamiales</taxon>
        <taxon>Lamiaceae</taxon>
        <taxon>Nepetoideae</taxon>
        <taxon>Ocimeae</taxon>
        <taxon>Isodoninae</taxon>
        <taxon>Isodon</taxon>
    </lineage>
</organism>
<proteinExistence type="evidence at transcript level"/>
<evidence type="ECO:0000250" key="1">
    <source>
        <dbReference type="UniProtKB" id="A0A1W6QDI7"/>
    </source>
</evidence>
<evidence type="ECO:0000250" key="2">
    <source>
        <dbReference type="UniProtKB" id="Q40577"/>
    </source>
</evidence>
<evidence type="ECO:0000255" key="3"/>
<evidence type="ECO:0000303" key="4">
    <source ref="1"/>
</evidence>
<evidence type="ECO:0000305" key="5"/>
<keyword id="KW-0150">Chloroplast</keyword>
<keyword id="KW-0456">Lyase</keyword>
<keyword id="KW-0460">Magnesium</keyword>
<keyword id="KW-0479">Metal-binding</keyword>
<keyword id="KW-0934">Plastid</keyword>
<keyword id="KW-0809">Transit peptide</keyword>
<gene>
    <name evidence="4" type="primary">KSL2</name>
</gene>
<dbReference type="EC" id="4.2.3.131" evidence="1"/>
<dbReference type="EMBL" id="MK043036">
    <property type="protein sequence ID" value="QFP98580.1"/>
    <property type="molecule type" value="mRNA"/>
</dbReference>
<dbReference type="SMR" id="A0A5P8DI07"/>
<dbReference type="UniPathway" id="UPA00213"/>
<dbReference type="GO" id="GO:0009507">
    <property type="term" value="C:chloroplast"/>
    <property type="evidence" value="ECO:0007669"/>
    <property type="project" value="UniProtKB-SubCell"/>
</dbReference>
<dbReference type="GO" id="GO:0000287">
    <property type="term" value="F:magnesium ion binding"/>
    <property type="evidence" value="ECO:0007669"/>
    <property type="project" value="InterPro"/>
</dbReference>
<dbReference type="GO" id="GO:0062205">
    <property type="term" value="F:miltiradiene synthase activity"/>
    <property type="evidence" value="ECO:0000250"/>
    <property type="project" value="UniProtKB"/>
</dbReference>
<dbReference type="GO" id="GO:0010333">
    <property type="term" value="F:terpene synthase activity"/>
    <property type="evidence" value="ECO:0007669"/>
    <property type="project" value="InterPro"/>
</dbReference>
<dbReference type="GO" id="GO:0009686">
    <property type="term" value="P:gibberellin biosynthetic process"/>
    <property type="evidence" value="ECO:0007669"/>
    <property type="project" value="TreeGrafter"/>
</dbReference>
<dbReference type="GO" id="GO:1901946">
    <property type="term" value="P:miltiradiene biosynthetic process"/>
    <property type="evidence" value="ECO:0000250"/>
    <property type="project" value="UniProtKB"/>
</dbReference>
<dbReference type="GO" id="GO:0016114">
    <property type="term" value="P:terpenoid biosynthetic process"/>
    <property type="evidence" value="ECO:0000250"/>
    <property type="project" value="UniProtKB"/>
</dbReference>
<dbReference type="FunFam" id="1.10.600.10:FF:000005">
    <property type="entry name" value="Ent-kaur-16-ene synthase, chloroplastic"/>
    <property type="match status" value="1"/>
</dbReference>
<dbReference type="Gene3D" id="1.10.600.10">
    <property type="entry name" value="Farnesyl Diphosphate Synthase"/>
    <property type="match status" value="1"/>
</dbReference>
<dbReference type="Gene3D" id="1.50.10.130">
    <property type="entry name" value="Terpene synthase, N-terminal domain"/>
    <property type="match status" value="1"/>
</dbReference>
<dbReference type="InterPro" id="IPR008949">
    <property type="entry name" value="Isoprenoid_synthase_dom_sf"/>
</dbReference>
<dbReference type="InterPro" id="IPR001906">
    <property type="entry name" value="Terpene_synth_N"/>
</dbReference>
<dbReference type="InterPro" id="IPR036965">
    <property type="entry name" value="Terpene_synth_N_sf"/>
</dbReference>
<dbReference type="InterPro" id="IPR050148">
    <property type="entry name" value="Terpene_synthase-like"/>
</dbReference>
<dbReference type="InterPro" id="IPR005630">
    <property type="entry name" value="Terpene_synthase_metal-bd"/>
</dbReference>
<dbReference type="InterPro" id="IPR008930">
    <property type="entry name" value="Terpenoid_cyclase/PrenylTrfase"/>
</dbReference>
<dbReference type="PANTHER" id="PTHR31739:SF33">
    <property type="entry name" value="CIS-ABIENOL SYNTHASE, CHLOROPLASTIC"/>
    <property type="match status" value="1"/>
</dbReference>
<dbReference type="PANTHER" id="PTHR31739">
    <property type="entry name" value="ENT-COPALYL DIPHOSPHATE SYNTHASE, CHLOROPLASTIC"/>
    <property type="match status" value="1"/>
</dbReference>
<dbReference type="Pfam" id="PF01397">
    <property type="entry name" value="Terpene_synth"/>
    <property type="match status" value="1"/>
</dbReference>
<dbReference type="Pfam" id="PF03936">
    <property type="entry name" value="Terpene_synth_C"/>
    <property type="match status" value="1"/>
</dbReference>
<dbReference type="SUPFAM" id="SSF48239">
    <property type="entry name" value="Terpenoid cyclases/Protein prenyltransferases"/>
    <property type="match status" value="1"/>
</dbReference>
<dbReference type="SUPFAM" id="SSF48576">
    <property type="entry name" value="Terpenoid synthases"/>
    <property type="match status" value="1"/>
</dbReference>
<accession>A0A5P8DI07</accession>
<name>KSL2_ISOJA</name>
<comment type="function">
    <text evidence="1">Involved in the biosynthesis of ent-kaurene diterpenoids natural products such as oridonin, miltiradiene, eriocalyxin B and nezukol, known to exhibit antitumor, anti-inflammatory and antibacterial activities (By similarity). Catalyzes the conversion of (+)-copalyl diphosphate ((+)-CPP) to miltiradiene (By similarity).</text>
</comment>
<comment type="catalytic activity">
    <reaction evidence="1">
        <text>(+)-copalyl diphosphate = miltiradiene + diphosphate</text>
        <dbReference type="Rhea" id="RHEA:33983"/>
        <dbReference type="ChEBI" id="CHEBI:33019"/>
        <dbReference type="ChEBI" id="CHEBI:58635"/>
        <dbReference type="ChEBI" id="CHEBI:65037"/>
        <dbReference type="EC" id="4.2.3.131"/>
    </reaction>
    <physiologicalReaction direction="left-to-right" evidence="1">
        <dbReference type="Rhea" id="RHEA:33984"/>
    </physiologicalReaction>
</comment>
<comment type="cofactor">
    <cofactor evidence="2">
        <name>Mg(2+)</name>
        <dbReference type="ChEBI" id="CHEBI:18420"/>
    </cofactor>
    <text evidence="2">Binds 3 Mg(2+) ions per subunit.</text>
</comment>
<comment type="pathway">
    <text evidence="1">Secondary metabolite biosynthesis; terpenoid biosynthesis.</text>
</comment>
<comment type="subcellular location">
    <subcellularLocation>
        <location evidence="3">Plastid</location>
        <location evidence="3">Chloroplast</location>
    </subcellularLocation>
</comment>
<comment type="domain">
    <text evidence="5">The Asp-Asp-Xaa-Xaa-Asp/Glu (DDXXD/E) motif is important for the catalytic activity, presumably through binding to Mg(2+).</text>
</comment>
<comment type="similarity">
    <text evidence="5">Belongs to the terpene synthase family.</text>
</comment>
<reference key="1">
    <citation type="submission" date="2018-10" db="EMBL/GenBank/DDBJ databases">
        <authorList>
            <person name="Ide Y."/>
            <person name="Yamamura Y."/>
            <person name="Lee J.-B."/>
        </authorList>
    </citation>
    <scope>NUCLEOTIDE SEQUENCE [MRNA]</scope>
</reference>
<protein>
    <recommendedName>
        <fullName evidence="4">Miltiradiene synthase KSL2, chloroplastic</fullName>
        <ecNumber evidence="1">4.2.3.131</ecNumber>
    </recommendedName>
    <alternativeName>
        <fullName evidence="4">Kaurene synthase 2</fullName>
        <shortName evidence="4">IjKSL2</shortName>
    </alternativeName>
</protein>